<name>CATA_EMENI</name>
<evidence type="ECO:0000250" key="1">
    <source>
        <dbReference type="UniProtKB" id="P04040"/>
    </source>
</evidence>
<evidence type="ECO:0000250" key="2">
    <source>
        <dbReference type="UniProtKB" id="P15202"/>
    </source>
</evidence>
<evidence type="ECO:0000255" key="3">
    <source>
        <dbReference type="PROSITE-ProRule" id="PRU10013"/>
    </source>
</evidence>
<evidence type="ECO:0000305" key="4"/>
<feature type="chain" id="PRO_0000084921" description="Catalase A">
    <location>
        <begin position="1"/>
        <end position="744"/>
    </location>
</feature>
<feature type="active site" evidence="3">
    <location>
        <position position="93"/>
    </location>
</feature>
<feature type="active site" evidence="3">
    <location>
        <position position="166"/>
    </location>
</feature>
<feature type="binding site" description="axial binding residue" evidence="1">
    <location>
        <position position="380"/>
    </location>
    <ligand>
        <name>heme</name>
        <dbReference type="ChEBI" id="CHEBI:30413"/>
    </ligand>
    <ligandPart>
        <name>Fe</name>
        <dbReference type="ChEBI" id="CHEBI:18248"/>
    </ligandPart>
</feature>
<feature type="sequence conflict" description="In Ref. 1; AAC49254." evidence="4" ref="1">
    <original>Q</original>
    <variation>A</variation>
    <location>
        <position position="582"/>
    </location>
</feature>
<comment type="function">
    <text evidence="1">Catalyzes the degradation of hydrogen peroxide (H(2)O(2)) generated by peroxisomal oxidases to water and oxygen, thereby protecting cells from the toxic effects of hydrogen peroxide.</text>
</comment>
<comment type="catalytic activity">
    <reaction evidence="3">
        <text>2 H2O2 = O2 + 2 H2O</text>
        <dbReference type="Rhea" id="RHEA:20309"/>
        <dbReference type="ChEBI" id="CHEBI:15377"/>
        <dbReference type="ChEBI" id="CHEBI:15379"/>
        <dbReference type="ChEBI" id="CHEBI:16240"/>
        <dbReference type="EC" id="1.11.1.6"/>
    </reaction>
</comment>
<comment type="cofactor">
    <cofactor evidence="2">
        <name>heme</name>
        <dbReference type="ChEBI" id="CHEBI:30413"/>
    </cofactor>
</comment>
<comment type="subcellular location">
    <subcellularLocation>
        <location evidence="2">Peroxisome matrix</location>
    </subcellularLocation>
</comment>
<comment type="developmental stage">
    <text>Sporulation-specific.</text>
</comment>
<comment type="similarity">
    <text evidence="4">Belongs to the catalase family.</text>
</comment>
<comment type="sequence caution" evidence="4">
    <conflict type="frameshift">
        <sequence resource="EMBL-CDS" id="AAC49254"/>
    </conflict>
</comment>
<sequence length="744" mass="83990">MATSITAGLQKAQQAVQDTATKNKKIVDISHDTVNVHTDQEQRTDFGVAITDPDHWLRVTNETHSGPSLLEDHIARERIHRFDHERIPERVVHARGTGAYGNFTLKESIEDLTYAGVLTDTSRNTPVFVRFSTVQGSRGSADTVRDVRGFAVKFYTDEGNWDIVGNNIPVFFIQDAIKFPDFVHAVKPEPHNEVPQAQTAHNNFWDFVYLHPEATHMFMWAMSDRAIPRSYRMMQGFGVNTFSLVNKEGKRHFVKFHWIPHLGVHSLVWDEALKLAGQDPDFHRKDLMEAIDNKAYPKWDFAIQAIPEEDQDKFEFDIFDATKVWPEEQVPLRVVGELELNRNIDEFFPETEQVAFCTSHIVPGIDFSDDPLLQGRNFSYQDTQISRLGVNWEEIPINRPVCPFLNHNRDGAKRHRITKGTVNYWPNRFEANPPASDKGFKSHPAPITGRKRRDLTPKFKEYHNQAQLFYNSLSEVEKVHVKKAFSFELDHCDDPIVYERLAGQRLAEIDLPLAQAVAEMVGAPIPTKALRDNHGKTSVRLSQFDFTPKAPGIISRRIAIIIGDGYDKIAFNGMKAAILAAQALPFVIGTKRSAIYAQGEDKNSSKGVIPDHMYDGMRSTMFDATFIPGGSHIETLQKNGQIRYWIAETFGHLKALGAMGEAAQLVKEVLGNVMGVQIAGADSAEPVEWYGVVTARGPESAESLSEGFKVLKDAGDFTSKFFYQISQHRNWQRELDGLASTVAF</sequence>
<reference key="1">
    <citation type="journal article" date="1996" name="Curr. Genet.">
        <title>catA, a new Aspergillus nidulans gene encoding a developmentally regulated catalase.</title>
        <authorList>
            <person name="Navarro R.E."/>
            <person name="Stringer M.A."/>
            <person name="Hansberg W."/>
            <person name="Timberlake W.E."/>
            <person name="Aguirre J."/>
        </authorList>
    </citation>
    <scope>NUCLEOTIDE SEQUENCE [GENOMIC DNA]</scope>
    <source>
        <strain>FGSC 26</strain>
    </source>
</reference>
<reference key="2">
    <citation type="journal article" date="2005" name="Nature">
        <title>Sequencing of Aspergillus nidulans and comparative analysis with A. fumigatus and A. oryzae.</title>
        <authorList>
            <person name="Galagan J.E."/>
            <person name="Calvo S.E."/>
            <person name="Cuomo C."/>
            <person name="Ma L.-J."/>
            <person name="Wortman J.R."/>
            <person name="Batzoglou S."/>
            <person name="Lee S.-I."/>
            <person name="Bastuerkmen M."/>
            <person name="Spevak C.C."/>
            <person name="Clutterbuck J."/>
            <person name="Kapitonov V."/>
            <person name="Jurka J."/>
            <person name="Scazzocchio C."/>
            <person name="Farman M.L."/>
            <person name="Butler J."/>
            <person name="Purcell S."/>
            <person name="Harris S."/>
            <person name="Braus G.H."/>
            <person name="Draht O."/>
            <person name="Busch S."/>
            <person name="D'Enfert C."/>
            <person name="Bouchier C."/>
            <person name="Goldman G.H."/>
            <person name="Bell-Pedersen D."/>
            <person name="Griffiths-Jones S."/>
            <person name="Doonan J.H."/>
            <person name="Yu J."/>
            <person name="Vienken K."/>
            <person name="Pain A."/>
            <person name="Freitag M."/>
            <person name="Selker E.U."/>
            <person name="Archer D.B."/>
            <person name="Penalva M.A."/>
            <person name="Oakley B.R."/>
            <person name="Momany M."/>
            <person name="Tanaka T."/>
            <person name="Kumagai T."/>
            <person name="Asai K."/>
            <person name="Machida M."/>
            <person name="Nierman W.C."/>
            <person name="Denning D.W."/>
            <person name="Caddick M.X."/>
            <person name="Hynes M."/>
            <person name="Paoletti M."/>
            <person name="Fischer R."/>
            <person name="Miller B.L."/>
            <person name="Dyer P.S."/>
            <person name="Sachs M.S."/>
            <person name="Osmani S.A."/>
            <person name="Birren B.W."/>
        </authorList>
    </citation>
    <scope>NUCLEOTIDE SEQUENCE [LARGE SCALE GENOMIC DNA]</scope>
    <source>
        <strain>FGSC A4 / ATCC 38163 / CBS 112.46 / NRRL 194 / M139</strain>
    </source>
</reference>
<reference key="3">
    <citation type="journal article" date="2009" name="Fungal Genet. Biol.">
        <title>The 2008 update of the Aspergillus nidulans genome annotation: a community effort.</title>
        <authorList>
            <person name="Wortman J.R."/>
            <person name="Gilsenan J.M."/>
            <person name="Joardar V."/>
            <person name="Deegan J."/>
            <person name="Clutterbuck J."/>
            <person name="Andersen M.R."/>
            <person name="Archer D."/>
            <person name="Bencina M."/>
            <person name="Braus G."/>
            <person name="Coutinho P."/>
            <person name="von Dohren H."/>
            <person name="Doonan J."/>
            <person name="Driessen A.J."/>
            <person name="Durek P."/>
            <person name="Espeso E."/>
            <person name="Fekete E."/>
            <person name="Flipphi M."/>
            <person name="Estrada C.G."/>
            <person name="Geysens S."/>
            <person name="Goldman G."/>
            <person name="de Groot P.W."/>
            <person name="Hansen K."/>
            <person name="Harris S.D."/>
            <person name="Heinekamp T."/>
            <person name="Helmstaedt K."/>
            <person name="Henrissat B."/>
            <person name="Hofmann G."/>
            <person name="Homan T."/>
            <person name="Horio T."/>
            <person name="Horiuchi H."/>
            <person name="James S."/>
            <person name="Jones M."/>
            <person name="Karaffa L."/>
            <person name="Karanyi Z."/>
            <person name="Kato M."/>
            <person name="Keller N."/>
            <person name="Kelly D.E."/>
            <person name="Kiel J.A."/>
            <person name="Kim J.M."/>
            <person name="van der Klei I.J."/>
            <person name="Klis F.M."/>
            <person name="Kovalchuk A."/>
            <person name="Krasevec N."/>
            <person name="Kubicek C.P."/>
            <person name="Liu B."/>
            <person name="Maccabe A."/>
            <person name="Meyer V."/>
            <person name="Mirabito P."/>
            <person name="Miskei M."/>
            <person name="Mos M."/>
            <person name="Mullins J."/>
            <person name="Nelson D.R."/>
            <person name="Nielsen J."/>
            <person name="Oakley B.R."/>
            <person name="Osmani S.A."/>
            <person name="Pakula T."/>
            <person name="Paszewski A."/>
            <person name="Paulsen I."/>
            <person name="Pilsyk S."/>
            <person name="Pocsi I."/>
            <person name="Punt P.J."/>
            <person name="Ram A.F."/>
            <person name="Ren Q."/>
            <person name="Robellet X."/>
            <person name="Robson G."/>
            <person name="Seiboth B."/>
            <person name="van Solingen P."/>
            <person name="Specht T."/>
            <person name="Sun J."/>
            <person name="Taheri-Talesh N."/>
            <person name="Takeshita N."/>
            <person name="Ussery D."/>
            <person name="vanKuyk P.A."/>
            <person name="Visser H."/>
            <person name="van de Vondervoort P.J."/>
            <person name="de Vries R.P."/>
            <person name="Walton J."/>
            <person name="Xiang X."/>
            <person name="Xiong Y."/>
            <person name="Zeng A.P."/>
            <person name="Brandt B.W."/>
            <person name="Cornell M.J."/>
            <person name="van den Hondel C.A."/>
            <person name="Visser J."/>
            <person name="Oliver S.G."/>
            <person name="Turner G."/>
        </authorList>
    </citation>
    <scope>GENOME REANNOTATION</scope>
    <source>
        <strain>FGSC A4 / ATCC 38163 / CBS 112.46 / NRRL 194 / M139</strain>
    </source>
</reference>
<accession>P55305</accession>
<accession>C8VAD2</accession>
<accession>Q5ASU3</accession>
<protein>
    <recommendedName>
        <fullName>Catalase A</fullName>
        <ecNumber evidence="3">1.11.1.6</ecNumber>
    </recommendedName>
    <alternativeName>
        <fullName>Spore-specific catalase</fullName>
    </alternativeName>
</protein>
<organism>
    <name type="scientific">Emericella nidulans (strain FGSC A4 / ATCC 38163 / CBS 112.46 / NRRL 194 / M139)</name>
    <name type="common">Aspergillus nidulans</name>
    <dbReference type="NCBI Taxonomy" id="227321"/>
    <lineage>
        <taxon>Eukaryota</taxon>
        <taxon>Fungi</taxon>
        <taxon>Dikarya</taxon>
        <taxon>Ascomycota</taxon>
        <taxon>Pezizomycotina</taxon>
        <taxon>Eurotiomycetes</taxon>
        <taxon>Eurotiomycetidae</taxon>
        <taxon>Eurotiales</taxon>
        <taxon>Aspergillaceae</taxon>
        <taxon>Aspergillus</taxon>
        <taxon>Aspergillus subgen. Nidulantes</taxon>
    </lineage>
</organism>
<gene>
    <name type="primary">catA</name>
    <name type="ORF">AN8637</name>
</gene>
<proteinExistence type="evidence at transcript level"/>
<keyword id="KW-0349">Heme</keyword>
<keyword id="KW-0376">Hydrogen peroxide</keyword>
<keyword id="KW-0408">Iron</keyword>
<keyword id="KW-0479">Metal-binding</keyword>
<keyword id="KW-0560">Oxidoreductase</keyword>
<keyword id="KW-0575">Peroxidase</keyword>
<keyword id="KW-0576">Peroxisome</keyword>
<keyword id="KW-1185">Reference proteome</keyword>
<keyword id="KW-0749">Sporulation</keyword>
<dbReference type="EC" id="1.11.1.6" evidence="3"/>
<dbReference type="EMBL" id="U37803">
    <property type="protein sequence ID" value="AAC49254.1"/>
    <property type="status" value="ALT_FRAME"/>
    <property type="molecule type" value="Genomic_DNA"/>
</dbReference>
<dbReference type="EMBL" id="AACD01000158">
    <property type="protein sequence ID" value="EAA60671.1"/>
    <property type="molecule type" value="Genomic_DNA"/>
</dbReference>
<dbReference type="EMBL" id="BN001303">
    <property type="protein sequence ID" value="CBF78282.1"/>
    <property type="molecule type" value="Genomic_DNA"/>
</dbReference>
<dbReference type="PIR" id="S68115">
    <property type="entry name" value="S68115"/>
</dbReference>
<dbReference type="RefSeq" id="XP_681906.1">
    <property type="nucleotide sequence ID" value="XM_676814.1"/>
</dbReference>
<dbReference type="SMR" id="P55305"/>
<dbReference type="STRING" id="227321.P55305"/>
<dbReference type="PeroxiBase" id="5213">
    <property type="entry name" value="AniKat01"/>
</dbReference>
<dbReference type="EnsemblFungi" id="CBF78282">
    <property type="protein sequence ID" value="CBF78282"/>
    <property type="gene ID" value="ANIA_08637"/>
</dbReference>
<dbReference type="KEGG" id="ani:ANIA_08637"/>
<dbReference type="VEuPathDB" id="FungiDB:AN8637"/>
<dbReference type="eggNOG" id="KOG0047">
    <property type="taxonomic scope" value="Eukaryota"/>
</dbReference>
<dbReference type="HOGENOM" id="CLU_010645_3_0_1"/>
<dbReference type="InParanoid" id="P55305"/>
<dbReference type="OMA" id="WQMSDRA"/>
<dbReference type="OrthoDB" id="6880011at2759"/>
<dbReference type="Proteomes" id="UP000000560">
    <property type="component" value="Chromosome III"/>
</dbReference>
<dbReference type="GO" id="GO:0005829">
    <property type="term" value="C:cytosol"/>
    <property type="evidence" value="ECO:0000318"/>
    <property type="project" value="GO_Central"/>
</dbReference>
<dbReference type="GO" id="GO:0005782">
    <property type="term" value="C:peroxisomal matrix"/>
    <property type="evidence" value="ECO:0007669"/>
    <property type="project" value="UniProtKB-SubCell"/>
</dbReference>
<dbReference type="GO" id="GO:0004096">
    <property type="term" value="F:catalase activity"/>
    <property type="evidence" value="ECO:0000315"/>
    <property type="project" value="AspGD"/>
</dbReference>
<dbReference type="GO" id="GO:0020037">
    <property type="term" value="F:heme binding"/>
    <property type="evidence" value="ECO:0000318"/>
    <property type="project" value="GO_Central"/>
</dbReference>
<dbReference type="GO" id="GO:0046872">
    <property type="term" value="F:metal ion binding"/>
    <property type="evidence" value="ECO:0007669"/>
    <property type="project" value="UniProtKB-KW"/>
</dbReference>
<dbReference type="GO" id="GO:0034605">
    <property type="term" value="P:cellular response to heat"/>
    <property type="evidence" value="ECO:0000315"/>
    <property type="project" value="AspGD"/>
</dbReference>
<dbReference type="GO" id="GO:0070301">
    <property type="term" value="P:cellular response to hydrogen peroxide"/>
    <property type="evidence" value="ECO:0000315"/>
    <property type="project" value="AspGD"/>
</dbReference>
<dbReference type="GO" id="GO:0010106">
    <property type="term" value="P:cellular response to iron ion starvation"/>
    <property type="evidence" value="ECO:0000270"/>
    <property type="project" value="AspGD"/>
</dbReference>
<dbReference type="GO" id="GO:0042744">
    <property type="term" value="P:hydrogen peroxide catabolic process"/>
    <property type="evidence" value="ECO:0000318"/>
    <property type="project" value="GO_Central"/>
</dbReference>
<dbReference type="GO" id="GO:0006979">
    <property type="term" value="P:response to oxidative stress"/>
    <property type="evidence" value="ECO:0000318"/>
    <property type="project" value="GO_Central"/>
</dbReference>
<dbReference type="GO" id="GO:0030435">
    <property type="term" value="P:sporulation resulting in formation of a cellular spore"/>
    <property type="evidence" value="ECO:0007669"/>
    <property type="project" value="UniProtKB-KW"/>
</dbReference>
<dbReference type="CDD" id="cd03132">
    <property type="entry name" value="GATase1_catalase"/>
    <property type="match status" value="1"/>
</dbReference>
<dbReference type="FunFam" id="2.40.180.10:FF:000003">
    <property type="entry name" value="Catalase"/>
    <property type="match status" value="1"/>
</dbReference>
<dbReference type="FunFam" id="3.40.50.880:FF:000050">
    <property type="entry name" value="Catalase"/>
    <property type="match status" value="1"/>
</dbReference>
<dbReference type="Gene3D" id="1.20.1370.20">
    <property type="match status" value="1"/>
</dbReference>
<dbReference type="Gene3D" id="3.40.50.880">
    <property type="match status" value="1"/>
</dbReference>
<dbReference type="Gene3D" id="2.40.180.10">
    <property type="entry name" value="Catalase core domain"/>
    <property type="match status" value="1"/>
</dbReference>
<dbReference type="InterPro" id="IPR018028">
    <property type="entry name" value="Catalase"/>
</dbReference>
<dbReference type="InterPro" id="IPR024708">
    <property type="entry name" value="Catalase_AS"/>
</dbReference>
<dbReference type="InterPro" id="IPR024712">
    <property type="entry name" value="Catalase_clade2"/>
</dbReference>
<dbReference type="InterPro" id="IPR043156">
    <property type="entry name" value="Catalase_clade2_helical"/>
</dbReference>
<dbReference type="InterPro" id="IPR011614">
    <property type="entry name" value="Catalase_core"/>
</dbReference>
<dbReference type="InterPro" id="IPR002226">
    <property type="entry name" value="Catalase_haem_BS"/>
</dbReference>
<dbReference type="InterPro" id="IPR010582">
    <property type="entry name" value="Catalase_immune_responsive"/>
</dbReference>
<dbReference type="InterPro" id="IPR041399">
    <property type="entry name" value="Catalase_large_C"/>
</dbReference>
<dbReference type="InterPro" id="IPR020835">
    <property type="entry name" value="Catalase_sf"/>
</dbReference>
<dbReference type="InterPro" id="IPR029062">
    <property type="entry name" value="Class_I_gatase-like"/>
</dbReference>
<dbReference type="PANTHER" id="PTHR42821">
    <property type="entry name" value="CATALASE"/>
    <property type="match status" value="1"/>
</dbReference>
<dbReference type="PANTHER" id="PTHR42821:SF1">
    <property type="entry name" value="CATALASE-B"/>
    <property type="match status" value="1"/>
</dbReference>
<dbReference type="Pfam" id="PF00199">
    <property type="entry name" value="Catalase"/>
    <property type="match status" value="1"/>
</dbReference>
<dbReference type="Pfam" id="PF06628">
    <property type="entry name" value="Catalase-rel"/>
    <property type="match status" value="1"/>
</dbReference>
<dbReference type="Pfam" id="PF18011">
    <property type="entry name" value="Catalase_C"/>
    <property type="match status" value="1"/>
</dbReference>
<dbReference type="PIRSF" id="PIRSF038927">
    <property type="entry name" value="Catalase_clade2"/>
    <property type="match status" value="1"/>
</dbReference>
<dbReference type="PRINTS" id="PR00067">
    <property type="entry name" value="CATALASE"/>
</dbReference>
<dbReference type="SMART" id="SM01060">
    <property type="entry name" value="Catalase"/>
    <property type="match status" value="1"/>
</dbReference>
<dbReference type="SUPFAM" id="SSF52317">
    <property type="entry name" value="Class I glutamine amidotransferase-like"/>
    <property type="match status" value="1"/>
</dbReference>
<dbReference type="SUPFAM" id="SSF56634">
    <property type="entry name" value="Heme-dependent catalase-like"/>
    <property type="match status" value="1"/>
</dbReference>
<dbReference type="PROSITE" id="PS00437">
    <property type="entry name" value="CATALASE_1"/>
    <property type="match status" value="1"/>
</dbReference>
<dbReference type="PROSITE" id="PS00438">
    <property type="entry name" value="CATALASE_2"/>
    <property type="match status" value="1"/>
</dbReference>
<dbReference type="PROSITE" id="PS51402">
    <property type="entry name" value="CATALASE_3"/>
    <property type="match status" value="1"/>
</dbReference>